<accession>Q9XXM8</accession>
<accession>Q86PK1</accession>
<gene>
    <name evidence="9" type="primary">nhr-68</name>
    <name evidence="9" type="ORF">H12C20.3</name>
</gene>
<reference evidence="7" key="1">
    <citation type="journal article" date="2005" name="J. Mol. Evol.">
        <title>Explosive lineage-specific expansion of the orphan nuclear receptor HNF4 in nematodes.</title>
        <authorList>
            <person name="Robinson-Rechavi M."/>
            <person name="Maina C.V."/>
            <person name="Gissendanner C.R."/>
            <person name="Laudet V."/>
            <person name="Sluder A."/>
        </authorList>
    </citation>
    <scope>NUCLEOTIDE SEQUENCE [MRNA]</scope>
</reference>
<reference evidence="8" key="2">
    <citation type="journal article" date="1998" name="Science">
        <title>Genome sequence of the nematode C. elegans: a platform for investigating biology.</title>
        <authorList>
            <consortium name="The C. elegans sequencing consortium"/>
        </authorList>
    </citation>
    <scope>NUCLEOTIDE SEQUENCE [LARGE SCALE GENOMIC DNA]</scope>
    <source>
        <strain evidence="8">Bristol N2</strain>
    </source>
</reference>
<reference evidence="6" key="3">
    <citation type="journal article" date="2019" name="Cell Rep.">
        <title>A Persistence Detector for Metabolic Network Rewiring in an Animal.</title>
        <authorList>
            <person name="Bulcha J.T."/>
            <person name="Giese G.E."/>
            <person name="Ali M.Z."/>
            <person name="Lee Y.U."/>
            <person name="Walker M.D."/>
            <person name="Holdorf A.D."/>
            <person name="Yilmaz L.S."/>
            <person name="Brewster R.C."/>
            <person name="Walhout A.J.M."/>
        </authorList>
    </citation>
    <scope>FUNCTION</scope>
    <scope>DISRUPTION PHENOTYPE</scope>
</reference>
<protein>
    <recommendedName>
        <fullName evidence="9">Nuclear hormone receptor family member nhr-68</fullName>
    </recommendedName>
</protein>
<feature type="chain" id="PRO_0000451998" description="Nuclear hormone receptor family member nhr-68">
    <location>
        <begin position="1"/>
        <end position="385"/>
    </location>
</feature>
<feature type="domain" description="NR LBD" evidence="2">
    <location>
        <begin position="145"/>
        <end position="384"/>
    </location>
</feature>
<feature type="DNA-binding region" description="Nuclear receptor" evidence="1">
    <location>
        <begin position="4"/>
        <end position="79"/>
    </location>
</feature>
<feature type="zinc finger region" description="NR C4-type" evidence="1">
    <location>
        <begin position="7"/>
        <end position="27"/>
    </location>
</feature>
<feature type="zinc finger region" description="NR C4-type" evidence="1">
    <location>
        <begin position="43"/>
        <end position="62"/>
    </location>
</feature>
<feature type="region of interest" description="Disordered" evidence="4">
    <location>
        <begin position="81"/>
        <end position="110"/>
    </location>
</feature>
<feature type="region of interest" description="AF-2" evidence="2">
    <location>
        <begin position="373"/>
        <end position="384"/>
    </location>
</feature>
<feature type="sequence conflict" description="In Ref. 1; AAO39181." evidence="6" ref="1">
    <original>Y</original>
    <variation>F</variation>
    <location>
        <position position="339"/>
    </location>
</feature>
<dbReference type="EMBL" id="AY204177">
    <property type="protein sequence ID" value="AAO39181.1"/>
    <property type="molecule type" value="mRNA"/>
</dbReference>
<dbReference type="EMBL" id="BX284605">
    <property type="protein sequence ID" value="CAA18351.1"/>
    <property type="molecule type" value="Genomic_DNA"/>
</dbReference>
<dbReference type="PIR" id="T23065">
    <property type="entry name" value="T23065"/>
</dbReference>
<dbReference type="RefSeq" id="NP_001256334.1">
    <property type="nucleotide sequence ID" value="NM_001269405.1"/>
</dbReference>
<dbReference type="RefSeq" id="NP_001366648.1">
    <property type="nucleotide sequence ID" value="NM_001380769.3"/>
</dbReference>
<dbReference type="SMR" id="Q9XXM8"/>
<dbReference type="FunCoup" id="Q9XXM8">
    <property type="interactions" value="11"/>
</dbReference>
<dbReference type="STRING" id="6239.H12C20.3a.1"/>
<dbReference type="PaxDb" id="6239-H12C20.3a.1"/>
<dbReference type="EnsemblMetazoa" id="H12C20.3a.1">
    <property type="protein sequence ID" value="H12C20.3a.1"/>
    <property type="gene ID" value="WBGene00003658"/>
</dbReference>
<dbReference type="GeneID" id="179589"/>
<dbReference type="UCSC" id="H12C20.3">
    <property type="organism name" value="c. elegans"/>
</dbReference>
<dbReference type="AGR" id="WB:WBGene00003658"/>
<dbReference type="WormBase" id="H12C20.3a">
    <property type="protein sequence ID" value="CE18808"/>
    <property type="gene ID" value="WBGene00003658"/>
    <property type="gene designation" value="nhr-68"/>
</dbReference>
<dbReference type="eggNOG" id="KOG3575">
    <property type="taxonomic scope" value="Eukaryota"/>
</dbReference>
<dbReference type="GeneTree" id="ENSGT00970000196356"/>
<dbReference type="HOGENOM" id="CLU_007368_3_3_1"/>
<dbReference type="InParanoid" id="Q9XXM8"/>
<dbReference type="OMA" id="CQFDQNC"/>
<dbReference type="OrthoDB" id="5771769at2759"/>
<dbReference type="PhylomeDB" id="Q9XXM8"/>
<dbReference type="Reactome" id="R-CEL-383280">
    <property type="pathway name" value="Nuclear Receptor transcription pathway"/>
</dbReference>
<dbReference type="PRO" id="PR:Q9XXM8"/>
<dbReference type="Proteomes" id="UP000001940">
    <property type="component" value="Chromosome V"/>
</dbReference>
<dbReference type="Bgee" id="WBGene00003658">
    <property type="expression patterns" value="Expressed in larva and 3 other cell types or tissues"/>
</dbReference>
<dbReference type="ExpressionAtlas" id="Q9XXM8">
    <property type="expression patterns" value="baseline and differential"/>
</dbReference>
<dbReference type="GO" id="GO:0000785">
    <property type="term" value="C:chromatin"/>
    <property type="evidence" value="ECO:0000315"/>
    <property type="project" value="UniProtKB"/>
</dbReference>
<dbReference type="GO" id="GO:0005634">
    <property type="term" value="C:nucleus"/>
    <property type="evidence" value="ECO:0007669"/>
    <property type="project" value="UniProtKB-SubCell"/>
</dbReference>
<dbReference type="GO" id="GO:0004879">
    <property type="term" value="F:nuclear receptor activity"/>
    <property type="evidence" value="ECO:0000318"/>
    <property type="project" value="GO_Central"/>
</dbReference>
<dbReference type="GO" id="GO:0000978">
    <property type="term" value="F:RNA polymerase II cis-regulatory region sequence-specific DNA binding"/>
    <property type="evidence" value="ECO:0000315"/>
    <property type="project" value="UniProtKB"/>
</dbReference>
<dbReference type="GO" id="GO:0008270">
    <property type="term" value="F:zinc ion binding"/>
    <property type="evidence" value="ECO:0007669"/>
    <property type="project" value="UniProtKB-KW"/>
</dbReference>
<dbReference type="GO" id="GO:0030154">
    <property type="term" value="P:cell differentiation"/>
    <property type="evidence" value="ECO:0000318"/>
    <property type="project" value="GO_Central"/>
</dbReference>
<dbReference type="GO" id="GO:0019543">
    <property type="term" value="P:propionate catabolic process"/>
    <property type="evidence" value="ECO:0000315"/>
    <property type="project" value="UniProtKB"/>
</dbReference>
<dbReference type="GO" id="GO:0006357">
    <property type="term" value="P:regulation of transcription by RNA polymerase II"/>
    <property type="evidence" value="ECO:0000315"/>
    <property type="project" value="UniProtKB"/>
</dbReference>
<dbReference type="CDD" id="cd06960">
    <property type="entry name" value="NR_DBD_HNF4A"/>
    <property type="match status" value="1"/>
</dbReference>
<dbReference type="FunFam" id="3.30.50.10:FF:000030">
    <property type="entry name" value="Nuclear Hormone Receptor family"/>
    <property type="match status" value="1"/>
</dbReference>
<dbReference type="Gene3D" id="3.30.50.10">
    <property type="entry name" value="Erythroid Transcription Factor GATA-1, subunit A"/>
    <property type="match status" value="1"/>
</dbReference>
<dbReference type="Gene3D" id="1.10.565.10">
    <property type="entry name" value="Retinoid X Receptor"/>
    <property type="match status" value="1"/>
</dbReference>
<dbReference type="InterPro" id="IPR049636">
    <property type="entry name" value="HNF4-like_DBD"/>
</dbReference>
<dbReference type="InterPro" id="IPR035500">
    <property type="entry name" value="NHR-like_dom_sf"/>
</dbReference>
<dbReference type="InterPro" id="IPR000536">
    <property type="entry name" value="Nucl_hrmn_rcpt_lig-bd"/>
</dbReference>
<dbReference type="InterPro" id="IPR050274">
    <property type="entry name" value="Nuclear_hormone_rcpt_NR2"/>
</dbReference>
<dbReference type="InterPro" id="IPR001628">
    <property type="entry name" value="Znf_hrmn_rcpt"/>
</dbReference>
<dbReference type="InterPro" id="IPR013088">
    <property type="entry name" value="Znf_NHR/GATA"/>
</dbReference>
<dbReference type="PANTHER" id="PTHR24083">
    <property type="entry name" value="NUCLEAR HORMONE RECEPTOR"/>
    <property type="match status" value="1"/>
</dbReference>
<dbReference type="Pfam" id="PF00104">
    <property type="entry name" value="Hormone_recep"/>
    <property type="match status" value="1"/>
</dbReference>
<dbReference type="Pfam" id="PF00105">
    <property type="entry name" value="zf-C4"/>
    <property type="match status" value="1"/>
</dbReference>
<dbReference type="PRINTS" id="PR00047">
    <property type="entry name" value="STROIDFINGER"/>
</dbReference>
<dbReference type="SMART" id="SM00430">
    <property type="entry name" value="HOLI"/>
    <property type="match status" value="1"/>
</dbReference>
<dbReference type="SMART" id="SM00399">
    <property type="entry name" value="ZnF_C4"/>
    <property type="match status" value="1"/>
</dbReference>
<dbReference type="SUPFAM" id="SSF57716">
    <property type="entry name" value="Glucocorticoid receptor-like (DNA-binding domain)"/>
    <property type="match status" value="1"/>
</dbReference>
<dbReference type="SUPFAM" id="SSF48508">
    <property type="entry name" value="Nuclear receptor ligand-binding domain"/>
    <property type="match status" value="1"/>
</dbReference>
<dbReference type="PROSITE" id="PS51843">
    <property type="entry name" value="NR_LBD"/>
    <property type="match status" value="1"/>
</dbReference>
<dbReference type="PROSITE" id="PS00031">
    <property type="entry name" value="NUCLEAR_REC_DBD_1"/>
    <property type="match status" value="1"/>
</dbReference>
<dbReference type="PROSITE" id="PS51030">
    <property type="entry name" value="NUCLEAR_REC_DBD_2"/>
    <property type="match status" value="1"/>
</dbReference>
<comment type="function">
    <text evidence="5">Probable transcription factor that acts in a feed-forward loop with nhr-10 to activate genes, including itself, involved in the vitamin B12-independent breakdown of the short-chain fatty acid propionate (PubMed:30625328). This pathway is triggered in response to a diet low in vitamin B12, when canonical vitamin B12-dependent propionate breakdown cannot function; the resulting accumulation of propionate is probably sensed by nhr-68 and/or nhr-10 (PubMed:30625328).</text>
</comment>
<comment type="subcellular location">
    <subcellularLocation>
        <location evidence="3">Nucleus</location>
    </subcellularLocation>
</comment>
<comment type="disruption phenotype">
    <text evidence="5">RNAi-mediated knockdown abolishes expression of acdh-1 when diet is supplemented with 5 nM vitamin B12 and high levels (40 mM) of propionate.</text>
</comment>
<comment type="similarity">
    <text evidence="3">Belongs to the nuclear hormone receptor family.</text>
</comment>
<sequence length="385" mass="44827">MENKEVCLVCQDFSSGYHYGIPSCNGCKTFFRRTVMKKQKFVCQFDQNCPVDKSIRCACRFCRFEKCLKVGMDKTSLQASRDPIGYTKRNKKTLRHPMNELSGDESNSCTPDRQLSPLRSFENSLNFLAVRERSANELRMSSYLPKRSLKQALCSKPLINDPIFMSKHATVSPRHTFEKLRFITQDDYHYWHERDWFVLTEYAKTFKVFKNMPYHDKTELVCHAAIVIPVLNQVYNSPDYGLDTVVFPDGTYYDRTHEPTRPAGLNRKKYQVLDLVLKPFREMEINFNEFAAFKAITFLNPDADISLESKHAINEERVLITKQLYAYMVQKDGLEKAIYRFGRLILMGTSMSKMACESKEAVWIADFFENIGFTSFAKELIFGDH</sequence>
<organism evidence="8">
    <name type="scientific">Caenorhabditis elegans</name>
    <dbReference type="NCBI Taxonomy" id="6239"/>
    <lineage>
        <taxon>Eukaryota</taxon>
        <taxon>Metazoa</taxon>
        <taxon>Ecdysozoa</taxon>
        <taxon>Nematoda</taxon>
        <taxon>Chromadorea</taxon>
        <taxon>Rhabditida</taxon>
        <taxon>Rhabditina</taxon>
        <taxon>Rhabditomorpha</taxon>
        <taxon>Rhabditoidea</taxon>
        <taxon>Rhabditidae</taxon>
        <taxon>Peloderinae</taxon>
        <taxon>Caenorhabditis</taxon>
    </lineage>
</organism>
<keyword id="KW-0010">Activator</keyword>
<keyword id="KW-0238">DNA-binding</keyword>
<keyword id="KW-0479">Metal-binding</keyword>
<keyword id="KW-0539">Nucleus</keyword>
<keyword id="KW-0675">Receptor</keyword>
<keyword id="KW-1185">Reference proteome</keyword>
<keyword id="KW-0804">Transcription</keyword>
<keyword id="KW-0805">Transcription regulation</keyword>
<keyword id="KW-0862">Zinc</keyword>
<keyword id="KW-0863">Zinc-finger</keyword>
<evidence type="ECO:0000255" key="1">
    <source>
        <dbReference type="PROSITE-ProRule" id="PRU00407"/>
    </source>
</evidence>
<evidence type="ECO:0000255" key="2">
    <source>
        <dbReference type="PROSITE-ProRule" id="PRU01189"/>
    </source>
</evidence>
<evidence type="ECO:0000255" key="3">
    <source>
        <dbReference type="RuleBase" id="RU004334"/>
    </source>
</evidence>
<evidence type="ECO:0000256" key="4">
    <source>
        <dbReference type="SAM" id="MobiDB-lite"/>
    </source>
</evidence>
<evidence type="ECO:0000269" key="5">
    <source>
    </source>
</evidence>
<evidence type="ECO:0000305" key="6"/>
<evidence type="ECO:0000312" key="7">
    <source>
        <dbReference type="EMBL" id="AAO39181.1"/>
    </source>
</evidence>
<evidence type="ECO:0000312" key="8">
    <source>
        <dbReference type="Proteomes" id="UP000001940"/>
    </source>
</evidence>
<evidence type="ECO:0000312" key="9">
    <source>
        <dbReference type="WormBase" id="H12C20.3a"/>
    </source>
</evidence>
<name>NHR68_CAEEL</name>
<proteinExistence type="evidence at transcript level"/>